<accession>Q67NF6</accession>
<evidence type="ECO:0000255" key="1">
    <source>
        <dbReference type="HAMAP-Rule" id="MF_01804"/>
    </source>
</evidence>
<evidence type="ECO:0000256" key="2">
    <source>
        <dbReference type="SAM" id="MobiDB-lite"/>
    </source>
</evidence>
<keyword id="KW-0131">Cell cycle</keyword>
<keyword id="KW-0132">Cell division</keyword>
<keyword id="KW-0159">Chromosome partition</keyword>
<keyword id="KW-0963">Cytoplasm</keyword>
<keyword id="KW-1185">Reference proteome</keyword>
<protein>
    <recommendedName>
        <fullName evidence="1">Segregation and condensation protein B</fullName>
    </recommendedName>
</protein>
<comment type="function">
    <text evidence="1">Participates in chromosomal partition during cell division. May act via the formation of a condensin-like complex containing Smc and ScpA that pull DNA away from mid-cell into both cell halves.</text>
</comment>
<comment type="subunit">
    <text evidence="1">Homodimer. Homodimerization may be required to stabilize the binding of ScpA to the Smc head domains. Component of a cohesin-like complex composed of ScpA, ScpB and the Smc homodimer, in which ScpA and ScpB bind to the head domain of Smc. The presence of the three proteins is required for the association of the complex with DNA.</text>
</comment>
<comment type="subcellular location">
    <subcellularLocation>
        <location evidence="1">Cytoplasm</location>
    </subcellularLocation>
    <text evidence="1">Associated with two foci at the outer edges of the nucleoid region in young cells, and at four foci within both cell halves in older cells.</text>
</comment>
<comment type="similarity">
    <text evidence="1">Belongs to the ScpB family.</text>
</comment>
<proteinExistence type="inferred from homology"/>
<reference key="1">
    <citation type="journal article" date="2004" name="Nucleic Acids Res.">
        <title>Genome sequence of Symbiobacterium thermophilum, an uncultivable bacterium that depends on microbial commensalism.</title>
        <authorList>
            <person name="Ueda K."/>
            <person name="Yamashita A."/>
            <person name="Ishikawa J."/>
            <person name="Shimada M."/>
            <person name="Watsuji T."/>
            <person name="Morimura K."/>
            <person name="Ikeda H."/>
            <person name="Hattori M."/>
            <person name="Beppu T."/>
        </authorList>
    </citation>
    <scope>NUCLEOTIDE SEQUENCE [LARGE SCALE GENOMIC DNA]</scope>
    <source>
        <strain>DSM 24528 / JCM 14929 / IAM 14863 / T</strain>
    </source>
</reference>
<gene>
    <name evidence="1" type="primary">scpB</name>
    <name type="ordered locus">STH1802</name>
</gene>
<feature type="chain" id="PRO_0000273316" description="Segregation and condensation protein B">
    <location>
        <begin position="1"/>
        <end position="219"/>
    </location>
</feature>
<feature type="region of interest" description="Disordered" evidence="2">
    <location>
        <begin position="193"/>
        <end position="219"/>
    </location>
</feature>
<feature type="compositionally biased region" description="Low complexity" evidence="2">
    <location>
        <begin position="196"/>
        <end position="207"/>
    </location>
</feature>
<dbReference type="EMBL" id="AP006840">
    <property type="protein sequence ID" value="BAD40787.1"/>
    <property type="molecule type" value="Genomic_DNA"/>
</dbReference>
<dbReference type="RefSeq" id="WP_011195930.1">
    <property type="nucleotide sequence ID" value="NC_006177.1"/>
</dbReference>
<dbReference type="SMR" id="Q67NF6"/>
<dbReference type="STRING" id="292459.STH1802"/>
<dbReference type="KEGG" id="sth:STH1802"/>
<dbReference type="eggNOG" id="COG1386">
    <property type="taxonomic scope" value="Bacteria"/>
</dbReference>
<dbReference type="HOGENOM" id="CLU_045647_5_2_9"/>
<dbReference type="OrthoDB" id="9806226at2"/>
<dbReference type="Proteomes" id="UP000000417">
    <property type="component" value="Chromosome"/>
</dbReference>
<dbReference type="GO" id="GO:0005737">
    <property type="term" value="C:cytoplasm"/>
    <property type="evidence" value="ECO:0007669"/>
    <property type="project" value="UniProtKB-SubCell"/>
</dbReference>
<dbReference type="GO" id="GO:0051301">
    <property type="term" value="P:cell division"/>
    <property type="evidence" value="ECO:0007669"/>
    <property type="project" value="UniProtKB-KW"/>
</dbReference>
<dbReference type="GO" id="GO:0051304">
    <property type="term" value="P:chromosome separation"/>
    <property type="evidence" value="ECO:0007669"/>
    <property type="project" value="InterPro"/>
</dbReference>
<dbReference type="GO" id="GO:0006260">
    <property type="term" value="P:DNA replication"/>
    <property type="evidence" value="ECO:0007669"/>
    <property type="project" value="UniProtKB-UniRule"/>
</dbReference>
<dbReference type="Gene3D" id="1.10.10.10">
    <property type="entry name" value="Winged helix-like DNA-binding domain superfamily/Winged helix DNA-binding domain"/>
    <property type="match status" value="2"/>
</dbReference>
<dbReference type="HAMAP" id="MF_01804">
    <property type="entry name" value="ScpB"/>
    <property type="match status" value="1"/>
</dbReference>
<dbReference type="InterPro" id="IPR005234">
    <property type="entry name" value="ScpB_csome_segregation"/>
</dbReference>
<dbReference type="InterPro" id="IPR036388">
    <property type="entry name" value="WH-like_DNA-bd_sf"/>
</dbReference>
<dbReference type="InterPro" id="IPR036390">
    <property type="entry name" value="WH_DNA-bd_sf"/>
</dbReference>
<dbReference type="NCBIfam" id="TIGR00281">
    <property type="entry name" value="SMC-Scp complex subunit ScpB"/>
    <property type="match status" value="1"/>
</dbReference>
<dbReference type="PANTHER" id="PTHR34298">
    <property type="entry name" value="SEGREGATION AND CONDENSATION PROTEIN B"/>
    <property type="match status" value="1"/>
</dbReference>
<dbReference type="PANTHER" id="PTHR34298:SF2">
    <property type="entry name" value="SEGREGATION AND CONDENSATION PROTEIN B"/>
    <property type="match status" value="1"/>
</dbReference>
<dbReference type="Pfam" id="PF04079">
    <property type="entry name" value="SMC_ScpB"/>
    <property type="match status" value="1"/>
</dbReference>
<dbReference type="SUPFAM" id="SSF46785">
    <property type="entry name" value="Winged helix' DNA-binding domain"/>
    <property type="match status" value="2"/>
</dbReference>
<sequence>MIWNHGKMILEALLLASPEPLTIKRIAEVIGLDERDAALLMADLQKDYEAPHRGLAIREMAGGYVLTTRPEAAEYVERLLQPKSRGLSHAALETLAIIAYRQPITKAEIENVRGVKVDRALETLLERGLIEDKGRKEAPGRPILYGTTAEFLRYFGLRELSELPPVEIDTSEPGLIVPTRTGGGEAEREVQASLFAGGEEPSAEAADGGAGESTHGEEE</sequence>
<organism>
    <name type="scientific">Symbiobacterium thermophilum (strain DSM 24528 / JCM 14929 / IAM 14863 / T)</name>
    <dbReference type="NCBI Taxonomy" id="292459"/>
    <lineage>
        <taxon>Bacteria</taxon>
        <taxon>Bacillati</taxon>
        <taxon>Bacillota</taxon>
        <taxon>Clostridia</taxon>
        <taxon>Eubacteriales</taxon>
        <taxon>Symbiobacteriaceae</taxon>
        <taxon>Symbiobacterium</taxon>
    </lineage>
</organism>
<name>SCPB_SYMTH</name>